<keyword id="KW-1015">Disulfide bond</keyword>
<keyword id="KW-0249">Electron transport</keyword>
<keyword id="KW-0676">Redox-active center</keyword>
<keyword id="KW-1185">Reference proteome</keyword>
<keyword id="KW-0813">Transport</keyword>
<comment type="function">
    <text evidence="1">Electron transport system for the ribonucleotide reductase system NrdEF.</text>
</comment>
<comment type="similarity">
    <text evidence="3">Belongs to the glutaredoxin family.</text>
</comment>
<protein>
    <recommendedName>
        <fullName>Glutaredoxin-like protein NrdH</fullName>
    </recommendedName>
</protein>
<name>NRDH_ECOL6</name>
<dbReference type="EMBL" id="AE014075">
    <property type="protein sequence ID" value="AAN81678.1"/>
    <property type="molecule type" value="Genomic_DNA"/>
</dbReference>
<dbReference type="RefSeq" id="WP_001223227.1">
    <property type="nucleotide sequence ID" value="NZ_CP051263.1"/>
</dbReference>
<dbReference type="SMR" id="P0AC66"/>
<dbReference type="STRING" id="199310.c3226"/>
<dbReference type="GeneID" id="93779337"/>
<dbReference type="KEGG" id="ecc:c3226"/>
<dbReference type="eggNOG" id="COG0695">
    <property type="taxonomic scope" value="Bacteria"/>
</dbReference>
<dbReference type="HOGENOM" id="CLU_026126_9_0_6"/>
<dbReference type="BioCyc" id="ECOL199310:C3226-MONOMER"/>
<dbReference type="Proteomes" id="UP000001410">
    <property type="component" value="Chromosome"/>
</dbReference>
<dbReference type="GO" id="GO:0009055">
    <property type="term" value="F:electron transfer activity"/>
    <property type="evidence" value="ECO:0007669"/>
    <property type="project" value="TreeGrafter"/>
</dbReference>
<dbReference type="GO" id="GO:0045454">
    <property type="term" value="P:cell redox homeostasis"/>
    <property type="evidence" value="ECO:0007669"/>
    <property type="project" value="InterPro"/>
</dbReference>
<dbReference type="CDD" id="cd02976">
    <property type="entry name" value="NrdH"/>
    <property type="match status" value="1"/>
</dbReference>
<dbReference type="FunFam" id="3.40.30.10:FF:000060">
    <property type="entry name" value="Glutaredoxin-like protein nrdH"/>
    <property type="match status" value="1"/>
</dbReference>
<dbReference type="Gene3D" id="3.40.30.10">
    <property type="entry name" value="Glutaredoxin"/>
    <property type="match status" value="1"/>
</dbReference>
<dbReference type="InterPro" id="IPR011909">
    <property type="entry name" value="GlrX_NrdH"/>
</dbReference>
<dbReference type="InterPro" id="IPR002109">
    <property type="entry name" value="Glutaredoxin"/>
</dbReference>
<dbReference type="InterPro" id="IPR051548">
    <property type="entry name" value="Grx-like_ET"/>
</dbReference>
<dbReference type="InterPro" id="IPR036249">
    <property type="entry name" value="Thioredoxin-like_sf"/>
</dbReference>
<dbReference type="NCBIfam" id="TIGR02194">
    <property type="entry name" value="GlrX_NrdH"/>
    <property type="match status" value="1"/>
</dbReference>
<dbReference type="NCBIfam" id="NF007657">
    <property type="entry name" value="PRK10329.1"/>
    <property type="match status" value="1"/>
</dbReference>
<dbReference type="PANTHER" id="PTHR34386">
    <property type="entry name" value="GLUTAREDOXIN"/>
    <property type="match status" value="1"/>
</dbReference>
<dbReference type="PANTHER" id="PTHR34386:SF1">
    <property type="entry name" value="GLUTAREDOXIN-LIKE PROTEIN NRDH"/>
    <property type="match status" value="1"/>
</dbReference>
<dbReference type="Pfam" id="PF00462">
    <property type="entry name" value="Glutaredoxin"/>
    <property type="match status" value="1"/>
</dbReference>
<dbReference type="SUPFAM" id="SSF52833">
    <property type="entry name" value="Thioredoxin-like"/>
    <property type="match status" value="1"/>
</dbReference>
<dbReference type="PROSITE" id="PS51354">
    <property type="entry name" value="GLUTAREDOXIN_2"/>
    <property type="match status" value="1"/>
</dbReference>
<feature type="chain" id="PRO_0000141640" description="Glutaredoxin-like protein NrdH">
    <location>
        <begin position="1"/>
        <end position="81"/>
    </location>
</feature>
<feature type="domain" description="Glutaredoxin" evidence="2">
    <location>
        <begin position="1"/>
        <end position="81"/>
    </location>
</feature>
<feature type="disulfide bond" description="Redox-active" evidence="1">
    <location>
        <begin position="11"/>
        <end position="14"/>
    </location>
</feature>
<gene>
    <name type="primary">nrdH</name>
    <name type="ordered locus">c3226</name>
</gene>
<evidence type="ECO:0000250" key="1"/>
<evidence type="ECO:0000255" key="2">
    <source>
        <dbReference type="PROSITE-ProRule" id="PRU00686"/>
    </source>
</evidence>
<evidence type="ECO:0000305" key="3"/>
<organism>
    <name type="scientific">Escherichia coli O6:H1 (strain CFT073 / ATCC 700928 / UPEC)</name>
    <dbReference type="NCBI Taxonomy" id="199310"/>
    <lineage>
        <taxon>Bacteria</taxon>
        <taxon>Pseudomonadati</taxon>
        <taxon>Pseudomonadota</taxon>
        <taxon>Gammaproteobacteria</taxon>
        <taxon>Enterobacterales</taxon>
        <taxon>Enterobacteriaceae</taxon>
        <taxon>Escherichia</taxon>
    </lineage>
</organism>
<reference key="1">
    <citation type="journal article" date="2002" name="Proc. Natl. Acad. Sci. U.S.A.">
        <title>Extensive mosaic structure revealed by the complete genome sequence of uropathogenic Escherichia coli.</title>
        <authorList>
            <person name="Welch R.A."/>
            <person name="Burland V."/>
            <person name="Plunkett G. III"/>
            <person name="Redford P."/>
            <person name="Roesch P."/>
            <person name="Rasko D."/>
            <person name="Buckles E.L."/>
            <person name="Liou S.-R."/>
            <person name="Boutin A."/>
            <person name="Hackett J."/>
            <person name="Stroud D."/>
            <person name="Mayhew G.F."/>
            <person name="Rose D.J."/>
            <person name="Zhou S."/>
            <person name="Schwartz D.C."/>
            <person name="Perna N.T."/>
            <person name="Mobley H.L.T."/>
            <person name="Donnenberg M.S."/>
            <person name="Blattner F.R."/>
        </authorList>
    </citation>
    <scope>NUCLEOTIDE SEQUENCE [LARGE SCALE GENOMIC DNA]</scope>
    <source>
        <strain>CFT073 / ATCC 700928 / UPEC</strain>
    </source>
</reference>
<sequence length="81" mass="9139">MRITIYTRNDCVQCHATKRAMENRGFDFEMINVDRVPEAAEALRAQGFRQLPVVIAGDLSWSGFRPDMINRLHPAPHAASA</sequence>
<proteinExistence type="inferred from homology"/>
<accession>P0AC66</accession>
<accession>Q47414</accession>